<organism>
    <name type="scientific">Rhodococcus jostii (strain RHA1)</name>
    <dbReference type="NCBI Taxonomy" id="101510"/>
    <lineage>
        <taxon>Bacteria</taxon>
        <taxon>Bacillati</taxon>
        <taxon>Actinomycetota</taxon>
        <taxon>Actinomycetes</taxon>
        <taxon>Mycobacteriales</taxon>
        <taxon>Nocardiaceae</taxon>
        <taxon>Rhodococcus</taxon>
    </lineage>
</organism>
<sequence length="147" mass="15542">MTIKLHHLRPAPGAKSDKIRVGRGEGGKRGKTAGRGTKGTKARKNVPAAFEGGQMPLHMRLPKLKGFTNPFRTEYQVVNVGDIARLFPEGGQVTVEDLVAKGAVRKNQLVKVLGDGDLTVAVQVTVDKFTGSAKEKIAAAGGTATEL</sequence>
<name>RL15_RHOJR</name>
<protein>
    <recommendedName>
        <fullName evidence="1">Large ribosomal subunit protein uL15</fullName>
    </recommendedName>
    <alternativeName>
        <fullName evidence="3">50S ribosomal protein L15</fullName>
    </alternativeName>
</protein>
<comment type="function">
    <text evidence="1">Binds to the 23S rRNA.</text>
</comment>
<comment type="subunit">
    <text evidence="1">Part of the 50S ribosomal subunit.</text>
</comment>
<comment type="similarity">
    <text evidence="1">Belongs to the universal ribosomal protein uL15 family.</text>
</comment>
<evidence type="ECO:0000255" key="1">
    <source>
        <dbReference type="HAMAP-Rule" id="MF_01341"/>
    </source>
</evidence>
<evidence type="ECO:0000256" key="2">
    <source>
        <dbReference type="SAM" id="MobiDB-lite"/>
    </source>
</evidence>
<evidence type="ECO:0000305" key="3"/>
<dbReference type="EMBL" id="CP000431">
    <property type="protein sequence ID" value="ABG97929.1"/>
    <property type="molecule type" value="Genomic_DNA"/>
</dbReference>
<dbReference type="RefSeq" id="WP_005239667.1">
    <property type="nucleotide sequence ID" value="NC_008268.1"/>
</dbReference>
<dbReference type="SMR" id="Q0S3F7"/>
<dbReference type="GeneID" id="69890535"/>
<dbReference type="KEGG" id="rha:RHA1_ro06152"/>
<dbReference type="eggNOG" id="COG0200">
    <property type="taxonomic scope" value="Bacteria"/>
</dbReference>
<dbReference type="HOGENOM" id="CLU_055188_4_1_11"/>
<dbReference type="OrthoDB" id="9810293at2"/>
<dbReference type="Proteomes" id="UP000008710">
    <property type="component" value="Chromosome"/>
</dbReference>
<dbReference type="GO" id="GO:0022625">
    <property type="term" value="C:cytosolic large ribosomal subunit"/>
    <property type="evidence" value="ECO:0007669"/>
    <property type="project" value="TreeGrafter"/>
</dbReference>
<dbReference type="GO" id="GO:0019843">
    <property type="term" value="F:rRNA binding"/>
    <property type="evidence" value="ECO:0007669"/>
    <property type="project" value="UniProtKB-UniRule"/>
</dbReference>
<dbReference type="GO" id="GO:0003735">
    <property type="term" value="F:structural constituent of ribosome"/>
    <property type="evidence" value="ECO:0007669"/>
    <property type="project" value="InterPro"/>
</dbReference>
<dbReference type="GO" id="GO:0006412">
    <property type="term" value="P:translation"/>
    <property type="evidence" value="ECO:0007669"/>
    <property type="project" value="UniProtKB-UniRule"/>
</dbReference>
<dbReference type="FunFam" id="3.100.10.10:FF:000005">
    <property type="entry name" value="50S ribosomal protein L15"/>
    <property type="match status" value="1"/>
</dbReference>
<dbReference type="Gene3D" id="3.100.10.10">
    <property type="match status" value="1"/>
</dbReference>
<dbReference type="HAMAP" id="MF_01341">
    <property type="entry name" value="Ribosomal_uL15"/>
    <property type="match status" value="1"/>
</dbReference>
<dbReference type="InterPro" id="IPR030878">
    <property type="entry name" value="Ribosomal_uL15"/>
</dbReference>
<dbReference type="InterPro" id="IPR021131">
    <property type="entry name" value="Ribosomal_uL15/eL18"/>
</dbReference>
<dbReference type="InterPro" id="IPR036227">
    <property type="entry name" value="Ribosomal_uL15/eL18_sf"/>
</dbReference>
<dbReference type="InterPro" id="IPR005749">
    <property type="entry name" value="Ribosomal_uL15_bac-type"/>
</dbReference>
<dbReference type="InterPro" id="IPR001196">
    <property type="entry name" value="Ribosomal_uL15_CS"/>
</dbReference>
<dbReference type="NCBIfam" id="TIGR01071">
    <property type="entry name" value="rplO_bact"/>
    <property type="match status" value="1"/>
</dbReference>
<dbReference type="PANTHER" id="PTHR12934">
    <property type="entry name" value="50S RIBOSOMAL PROTEIN L15"/>
    <property type="match status" value="1"/>
</dbReference>
<dbReference type="PANTHER" id="PTHR12934:SF11">
    <property type="entry name" value="LARGE RIBOSOMAL SUBUNIT PROTEIN UL15M"/>
    <property type="match status" value="1"/>
</dbReference>
<dbReference type="Pfam" id="PF00828">
    <property type="entry name" value="Ribosomal_L27A"/>
    <property type="match status" value="1"/>
</dbReference>
<dbReference type="SUPFAM" id="SSF52080">
    <property type="entry name" value="Ribosomal proteins L15p and L18e"/>
    <property type="match status" value="1"/>
</dbReference>
<dbReference type="PROSITE" id="PS00475">
    <property type="entry name" value="RIBOSOMAL_L15"/>
    <property type="match status" value="1"/>
</dbReference>
<gene>
    <name evidence="1" type="primary">rplO</name>
    <name type="ordered locus">RHA1_ro06152</name>
</gene>
<feature type="chain" id="PRO_0000251549" description="Large ribosomal subunit protein uL15">
    <location>
        <begin position="1"/>
        <end position="147"/>
    </location>
</feature>
<feature type="region of interest" description="Disordered" evidence="2">
    <location>
        <begin position="1"/>
        <end position="45"/>
    </location>
</feature>
<feature type="compositionally biased region" description="Basic and acidic residues" evidence="2">
    <location>
        <begin position="15"/>
        <end position="28"/>
    </location>
</feature>
<keyword id="KW-0687">Ribonucleoprotein</keyword>
<keyword id="KW-0689">Ribosomal protein</keyword>
<keyword id="KW-0694">RNA-binding</keyword>
<keyword id="KW-0699">rRNA-binding</keyword>
<accession>Q0S3F7</accession>
<reference key="1">
    <citation type="journal article" date="2006" name="Proc. Natl. Acad. Sci. U.S.A.">
        <title>The complete genome of Rhodococcus sp. RHA1 provides insights into a catabolic powerhouse.</title>
        <authorList>
            <person name="McLeod M.P."/>
            <person name="Warren R.L."/>
            <person name="Hsiao W.W.L."/>
            <person name="Araki N."/>
            <person name="Myhre M."/>
            <person name="Fernandes C."/>
            <person name="Miyazawa D."/>
            <person name="Wong W."/>
            <person name="Lillquist A.L."/>
            <person name="Wang D."/>
            <person name="Dosanjh M."/>
            <person name="Hara H."/>
            <person name="Petrescu A."/>
            <person name="Morin R.D."/>
            <person name="Yang G."/>
            <person name="Stott J.M."/>
            <person name="Schein J.E."/>
            <person name="Shin H."/>
            <person name="Smailus D."/>
            <person name="Siddiqui A.S."/>
            <person name="Marra M.A."/>
            <person name="Jones S.J.M."/>
            <person name="Holt R."/>
            <person name="Brinkman F.S.L."/>
            <person name="Miyauchi K."/>
            <person name="Fukuda M."/>
            <person name="Davies J.E."/>
            <person name="Mohn W.W."/>
            <person name="Eltis L.D."/>
        </authorList>
    </citation>
    <scope>NUCLEOTIDE SEQUENCE [LARGE SCALE GENOMIC DNA]</scope>
    <source>
        <strain>RHA1</strain>
    </source>
</reference>
<proteinExistence type="inferred from homology"/>